<proteinExistence type="inferred from homology"/>
<name>RS19_CAMJD</name>
<protein>
    <recommendedName>
        <fullName evidence="1">Small ribosomal subunit protein uS19</fullName>
    </recommendedName>
    <alternativeName>
        <fullName evidence="2">30S ribosomal protein S19</fullName>
    </alternativeName>
</protein>
<dbReference type="EMBL" id="CP000768">
    <property type="protein sequence ID" value="ABS44526.1"/>
    <property type="molecule type" value="Genomic_DNA"/>
</dbReference>
<dbReference type="SMR" id="A7H652"/>
<dbReference type="KEGG" id="cjd:JJD26997_2077"/>
<dbReference type="HOGENOM" id="CLU_144911_0_1_7"/>
<dbReference type="Proteomes" id="UP000002302">
    <property type="component" value="Chromosome"/>
</dbReference>
<dbReference type="GO" id="GO:0005737">
    <property type="term" value="C:cytoplasm"/>
    <property type="evidence" value="ECO:0007669"/>
    <property type="project" value="UniProtKB-ARBA"/>
</dbReference>
<dbReference type="GO" id="GO:0015935">
    <property type="term" value="C:small ribosomal subunit"/>
    <property type="evidence" value="ECO:0007669"/>
    <property type="project" value="InterPro"/>
</dbReference>
<dbReference type="GO" id="GO:0019843">
    <property type="term" value="F:rRNA binding"/>
    <property type="evidence" value="ECO:0007669"/>
    <property type="project" value="UniProtKB-UniRule"/>
</dbReference>
<dbReference type="GO" id="GO:0003735">
    <property type="term" value="F:structural constituent of ribosome"/>
    <property type="evidence" value="ECO:0007669"/>
    <property type="project" value="InterPro"/>
</dbReference>
<dbReference type="GO" id="GO:0000028">
    <property type="term" value="P:ribosomal small subunit assembly"/>
    <property type="evidence" value="ECO:0007669"/>
    <property type="project" value="TreeGrafter"/>
</dbReference>
<dbReference type="GO" id="GO:0006412">
    <property type="term" value="P:translation"/>
    <property type="evidence" value="ECO:0007669"/>
    <property type="project" value="UniProtKB-UniRule"/>
</dbReference>
<dbReference type="FunFam" id="3.30.860.10:FF:000001">
    <property type="entry name" value="30S ribosomal protein S19"/>
    <property type="match status" value="1"/>
</dbReference>
<dbReference type="Gene3D" id="3.30.860.10">
    <property type="entry name" value="30s Ribosomal Protein S19, Chain A"/>
    <property type="match status" value="1"/>
</dbReference>
<dbReference type="HAMAP" id="MF_00531">
    <property type="entry name" value="Ribosomal_uS19"/>
    <property type="match status" value="1"/>
</dbReference>
<dbReference type="InterPro" id="IPR002222">
    <property type="entry name" value="Ribosomal_uS19"/>
</dbReference>
<dbReference type="InterPro" id="IPR005732">
    <property type="entry name" value="Ribosomal_uS19_bac-type"/>
</dbReference>
<dbReference type="InterPro" id="IPR020934">
    <property type="entry name" value="Ribosomal_uS19_CS"/>
</dbReference>
<dbReference type="InterPro" id="IPR023575">
    <property type="entry name" value="Ribosomal_uS19_SF"/>
</dbReference>
<dbReference type="NCBIfam" id="TIGR01050">
    <property type="entry name" value="rpsS_bact"/>
    <property type="match status" value="1"/>
</dbReference>
<dbReference type="PANTHER" id="PTHR11880">
    <property type="entry name" value="RIBOSOMAL PROTEIN S19P FAMILY MEMBER"/>
    <property type="match status" value="1"/>
</dbReference>
<dbReference type="PANTHER" id="PTHR11880:SF8">
    <property type="entry name" value="SMALL RIBOSOMAL SUBUNIT PROTEIN US19M"/>
    <property type="match status" value="1"/>
</dbReference>
<dbReference type="Pfam" id="PF00203">
    <property type="entry name" value="Ribosomal_S19"/>
    <property type="match status" value="1"/>
</dbReference>
<dbReference type="PIRSF" id="PIRSF002144">
    <property type="entry name" value="Ribosomal_S19"/>
    <property type="match status" value="1"/>
</dbReference>
<dbReference type="PRINTS" id="PR00975">
    <property type="entry name" value="RIBOSOMALS19"/>
</dbReference>
<dbReference type="SUPFAM" id="SSF54570">
    <property type="entry name" value="Ribosomal protein S19"/>
    <property type="match status" value="1"/>
</dbReference>
<dbReference type="PROSITE" id="PS00323">
    <property type="entry name" value="RIBOSOMAL_S19"/>
    <property type="match status" value="1"/>
</dbReference>
<evidence type="ECO:0000255" key="1">
    <source>
        <dbReference type="HAMAP-Rule" id="MF_00531"/>
    </source>
</evidence>
<evidence type="ECO:0000305" key="2"/>
<accession>A7H652</accession>
<keyword id="KW-0687">Ribonucleoprotein</keyword>
<keyword id="KW-0689">Ribosomal protein</keyword>
<keyword id="KW-0694">RNA-binding</keyword>
<keyword id="KW-0699">rRNA-binding</keyword>
<organism>
    <name type="scientific">Campylobacter jejuni subsp. doylei (strain ATCC BAA-1458 / RM4099 / 269.97)</name>
    <dbReference type="NCBI Taxonomy" id="360109"/>
    <lineage>
        <taxon>Bacteria</taxon>
        <taxon>Pseudomonadati</taxon>
        <taxon>Campylobacterota</taxon>
        <taxon>Epsilonproteobacteria</taxon>
        <taxon>Campylobacterales</taxon>
        <taxon>Campylobacteraceae</taxon>
        <taxon>Campylobacter</taxon>
    </lineage>
</organism>
<feature type="chain" id="PRO_1000051032" description="Small ribosomal subunit protein uS19">
    <location>
        <begin position="1"/>
        <end position="93"/>
    </location>
</feature>
<comment type="function">
    <text evidence="1">Protein S19 forms a complex with S13 that binds strongly to the 16S ribosomal RNA.</text>
</comment>
<comment type="similarity">
    <text evidence="1">Belongs to the universal ribosomal protein uS19 family.</text>
</comment>
<sequence>MARSLKKGPFVDDHVMKKVIAAKKANDNKPIKTWSRRSTITPDMIGLTFNVHNGKSFIPVYITENHIGYKLGEFAPTRTFKGHKGSVQKKIGK</sequence>
<reference key="1">
    <citation type="submission" date="2007-07" db="EMBL/GenBank/DDBJ databases">
        <title>Complete genome sequence of Campylobacter jejuni subsp doylei 269.97 isolated from human blood.</title>
        <authorList>
            <person name="Fouts D.E."/>
            <person name="Mongodin E.F."/>
            <person name="Puiu D."/>
            <person name="Sebastian Y."/>
            <person name="Miller W.G."/>
            <person name="Mandrell R.E."/>
            <person name="Lastovica A.J."/>
            <person name="Nelson K.E."/>
        </authorList>
    </citation>
    <scope>NUCLEOTIDE SEQUENCE [LARGE SCALE GENOMIC DNA]</scope>
    <source>
        <strain>ATCC BAA-1458 / RM4099 / 269.97</strain>
    </source>
</reference>
<gene>
    <name evidence="1" type="primary">rpsS</name>
    <name type="ordered locus">JJD26997_2077</name>
</gene>